<reference key="1">
    <citation type="journal article" date="1997" name="Science">
        <title>The complete genome sequence of Escherichia coli K-12.</title>
        <authorList>
            <person name="Blattner F.R."/>
            <person name="Plunkett G. III"/>
            <person name="Bloch C.A."/>
            <person name="Perna N.T."/>
            <person name="Burland V."/>
            <person name="Riley M."/>
            <person name="Collado-Vides J."/>
            <person name="Glasner J.D."/>
            <person name="Rode C.K."/>
            <person name="Mayhew G.F."/>
            <person name="Gregor J."/>
            <person name="Davis N.W."/>
            <person name="Kirkpatrick H.A."/>
            <person name="Goeden M.A."/>
            <person name="Rose D.J."/>
            <person name="Mau B."/>
            <person name="Shao Y."/>
        </authorList>
    </citation>
    <scope>NUCLEOTIDE SEQUENCE [LARGE SCALE GENOMIC DNA]</scope>
    <source>
        <strain>K12 / MG1655 / ATCC 47076</strain>
    </source>
</reference>
<reference key="2">
    <citation type="journal article" date="2006" name="Mol. Syst. Biol.">
        <title>Highly accurate genome sequences of Escherichia coli K-12 strains MG1655 and W3110.</title>
        <authorList>
            <person name="Hayashi K."/>
            <person name="Morooka N."/>
            <person name="Yamamoto Y."/>
            <person name="Fujita K."/>
            <person name="Isono K."/>
            <person name="Choi S."/>
            <person name="Ohtsubo E."/>
            <person name="Baba T."/>
            <person name="Wanner B.L."/>
            <person name="Mori H."/>
            <person name="Horiuchi T."/>
        </authorList>
    </citation>
    <scope>NUCLEOTIDE SEQUENCE [LARGE SCALE GENOMIC DNA]</scope>
    <source>
        <strain>K12 / W3110 / ATCC 27325 / DSM 5911</strain>
    </source>
</reference>
<reference key="3">
    <citation type="journal article" date="2001" name="J. Bacteriol.">
        <title>Overexpression of the response regulator evgA of the two-component signal transduction system modulates multidrug resistance conferred by multidrug resistance transporters.</title>
        <authorList>
            <person name="Nishino K."/>
            <person name="Yamaguchi A."/>
        </authorList>
    </citation>
    <scope>PROTEIN SEQUENCE OF 22-31</scope>
    <source>
        <strain>K12 / W3104 / ATCC 19020</strain>
    </source>
</reference>
<gene>
    <name type="primary">yfdX</name>
    <name type="ordered locus">b2375</name>
    <name type="ordered locus">JW2372</name>
</gene>
<dbReference type="EMBL" id="U00096">
    <property type="protein sequence ID" value="AAC75434.1"/>
    <property type="molecule type" value="Genomic_DNA"/>
</dbReference>
<dbReference type="EMBL" id="AP009048">
    <property type="protein sequence ID" value="BAE76705.1"/>
    <property type="molecule type" value="Genomic_DNA"/>
</dbReference>
<dbReference type="PIR" id="D65011">
    <property type="entry name" value="D65011"/>
</dbReference>
<dbReference type="RefSeq" id="NP_416876.1">
    <property type="nucleotide sequence ID" value="NC_000913.3"/>
</dbReference>
<dbReference type="RefSeq" id="WP_000825600.1">
    <property type="nucleotide sequence ID" value="NZ_LN832404.1"/>
</dbReference>
<dbReference type="SMR" id="P76520"/>
<dbReference type="BioGRID" id="4260861">
    <property type="interactions" value="13"/>
</dbReference>
<dbReference type="FunCoup" id="P76520">
    <property type="interactions" value="12"/>
</dbReference>
<dbReference type="IntAct" id="P76520">
    <property type="interactions" value="2"/>
</dbReference>
<dbReference type="STRING" id="511145.b2375"/>
<dbReference type="PaxDb" id="511145-b2375"/>
<dbReference type="EnsemblBacteria" id="AAC75434">
    <property type="protein sequence ID" value="AAC75434"/>
    <property type="gene ID" value="b2375"/>
</dbReference>
<dbReference type="GeneID" id="949108"/>
<dbReference type="KEGG" id="ecj:JW2372"/>
<dbReference type="KEGG" id="eco:b2375"/>
<dbReference type="KEGG" id="ecoc:C3026_13205"/>
<dbReference type="PATRIC" id="fig|511145.12.peg.2473"/>
<dbReference type="EchoBASE" id="EB3898"/>
<dbReference type="eggNOG" id="ENOG502Z95M">
    <property type="taxonomic scope" value="Bacteria"/>
</dbReference>
<dbReference type="HOGENOM" id="CLU_091661_1_0_6"/>
<dbReference type="InParanoid" id="P76520"/>
<dbReference type="OMA" id="FTWAADA"/>
<dbReference type="OrthoDB" id="6506866at2"/>
<dbReference type="PhylomeDB" id="P76520"/>
<dbReference type="BioCyc" id="EcoCyc:G7238-MONOMER"/>
<dbReference type="PRO" id="PR:P76520"/>
<dbReference type="Proteomes" id="UP000000625">
    <property type="component" value="Chromosome"/>
</dbReference>
<dbReference type="Gene3D" id="6.10.250.2140">
    <property type="match status" value="1"/>
</dbReference>
<dbReference type="Gene3D" id="1.20.120.1940">
    <property type="entry name" value="YfdX protein domain"/>
    <property type="match status" value="1"/>
</dbReference>
<dbReference type="InterPro" id="IPR021236">
    <property type="entry name" value="Uncharacterised_YfdX"/>
</dbReference>
<dbReference type="NCBIfam" id="NF007645">
    <property type="entry name" value="PRK10316.1"/>
    <property type="match status" value="1"/>
</dbReference>
<dbReference type="Pfam" id="PF10938">
    <property type="entry name" value="YfdX"/>
    <property type="match status" value="1"/>
</dbReference>
<accession>P76520</accession>
<accession>Q2MAK1</accession>
<feature type="signal peptide" evidence="1">
    <location>
        <begin position="1"/>
        <end position="21"/>
    </location>
</feature>
<feature type="chain" id="PRO_0000013881" description="Protein YfdX">
    <location>
        <begin position="22"/>
        <end position="211"/>
    </location>
</feature>
<organism>
    <name type="scientific">Escherichia coli (strain K12)</name>
    <dbReference type="NCBI Taxonomy" id="83333"/>
    <lineage>
        <taxon>Bacteria</taxon>
        <taxon>Pseudomonadati</taxon>
        <taxon>Pseudomonadota</taxon>
        <taxon>Gammaproteobacteria</taxon>
        <taxon>Enterobacterales</taxon>
        <taxon>Enterobacteriaceae</taxon>
        <taxon>Escherichia</taxon>
    </lineage>
</organism>
<name>YFDX_ECOLI</name>
<protein>
    <recommendedName>
        <fullName>Protein YfdX</fullName>
    </recommendedName>
</protein>
<sequence length="211" mass="22977">MKRLIMATMVTAILASSTVWAADNAPVAAQQQTQQVQQTQKTAAAAERISEQGLYAMRDVQVARLALFHGDPEKAKELTNEASALLSDDSTEWAKFAKPGKKTNLNDDQYIVINASVGISESYVATPEKEAAIKIANEKMAKGDKKGAMEELRLAGVGVMENQYLMPLKQTRNALADAQKLLDKKQYYEANLALKGAEDGIIVDSEALFVN</sequence>
<evidence type="ECO:0000269" key="1">
    <source>
    </source>
</evidence>
<proteinExistence type="evidence at protein level"/>
<keyword id="KW-0903">Direct protein sequencing</keyword>
<keyword id="KW-1185">Reference proteome</keyword>
<keyword id="KW-0732">Signal</keyword>
<comment type="induction">
    <text>By EvgA.</text>
</comment>